<name>YZPY_ECOLX</name>
<gene>
    <name type="primary">pyrL</name>
    <name type="synonym">pyrE-LP</name>
</gene>
<accession>P17776</accession>
<comment type="caution">
    <text evidence="1">Could be the product of a pseudogene.</text>
</comment>
<dbReference type="EMBL" id="X00781">
    <property type="status" value="NOT_ANNOTATED_CDS"/>
    <property type="molecule type" value="Genomic_DNA"/>
</dbReference>
<dbReference type="EMBL" id="V01578">
    <property type="status" value="NOT_ANNOTATED_CDS"/>
    <property type="molecule type" value="Genomic_DNA"/>
</dbReference>
<dbReference type="PIR" id="A30400">
    <property type="entry name" value="LFECPE"/>
</dbReference>
<protein>
    <recommendedName>
        <fullName>Putative PyrE leader peptide</fullName>
    </recommendedName>
</protein>
<organism>
    <name type="scientific">Escherichia coli</name>
    <dbReference type="NCBI Taxonomy" id="562"/>
    <lineage>
        <taxon>Bacteria</taxon>
        <taxon>Pseudomonadati</taxon>
        <taxon>Pseudomonadota</taxon>
        <taxon>Gammaproteobacteria</taxon>
        <taxon>Enterobacterales</taxon>
        <taxon>Enterobacteriaceae</taxon>
        <taxon>Escherichia</taxon>
    </lineage>
</organism>
<reference key="1">
    <citation type="journal article" date="1984" name="EMBO J.">
        <title>Structure of the Escherichia coli pyrE operon and control of pyrE expression by a UTP modulated intercistronic attentuation.</title>
        <authorList>
            <person name="Poulsen P."/>
            <person name="Bonekamp F."/>
            <person name="Jensen K.F."/>
        </authorList>
    </citation>
    <scope>NUCLEOTIDE SEQUENCE [GENOMIC DNA]</scope>
</reference>
<reference key="2">
    <citation type="journal article" date="1983" name="Eur. J. Biochem.">
        <title>Nucleotide sequence of the Escherichia coli pyrE gene and of the DNA in front of the protein-coding region.</title>
        <authorList>
            <person name="Poulsen P."/>
            <person name="Jensen K.F."/>
            <person name="Valentin-Hansen P."/>
            <person name="Carlsson P."/>
            <person name="Lundberg L.G."/>
        </authorList>
    </citation>
    <scope>NUCLEOTIDE SEQUENCE [GENOMIC DNA]</scope>
</reference>
<feature type="peptide" id="PRO_0000044609" description="Putative PyrE leader peptide">
    <location>
        <begin position="1"/>
        <end position="12"/>
    </location>
</feature>
<evidence type="ECO:0000305" key="1"/>
<sequence length="12" mass="1542">MSRLFFVCRKVR</sequence>
<proteinExistence type="uncertain"/>